<feature type="initiator methionine" description="Removed" evidence="2">
    <location>
        <position position="1"/>
    </location>
</feature>
<feature type="chain" id="PRO_0000073621" description="Parvalbumin beta">
    <location>
        <begin position="2"/>
        <end position="109"/>
    </location>
</feature>
<feature type="domain" description="EF-hand 1" evidence="5">
    <location>
        <begin position="39"/>
        <end position="74"/>
    </location>
</feature>
<feature type="domain" description="EF-hand 2" evidence="5">
    <location>
        <begin position="78"/>
        <end position="109"/>
    </location>
</feature>
<feature type="region of interest" description="IgE-binding" evidence="12">
    <location>
        <begin position="22"/>
        <end position="41"/>
    </location>
</feature>
<feature type="binding site" evidence="5 9 20">
    <location>
        <position position="52"/>
    </location>
    <ligand>
        <name>Ca(2+)</name>
        <dbReference type="ChEBI" id="CHEBI:29108"/>
        <label>1</label>
    </ligand>
</feature>
<feature type="binding site" evidence="5 9 20">
    <location>
        <position position="54"/>
    </location>
    <ligand>
        <name>Ca(2+)</name>
        <dbReference type="ChEBI" id="CHEBI:29108"/>
        <label>1</label>
    </ligand>
</feature>
<feature type="binding site" evidence="5 9 20">
    <location>
        <position position="56"/>
    </location>
    <ligand>
        <name>Ca(2+)</name>
        <dbReference type="ChEBI" id="CHEBI:29108"/>
        <label>1</label>
    </ligand>
</feature>
<feature type="binding site" evidence="9 20">
    <location>
        <position position="58"/>
    </location>
    <ligand>
        <name>Ca(2+)</name>
        <dbReference type="ChEBI" id="CHEBI:29108"/>
        <label>1</label>
    </ligand>
</feature>
<feature type="binding site" evidence="4">
    <location>
        <position position="60"/>
    </location>
    <ligand>
        <name>Ca(2+)</name>
        <dbReference type="ChEBI" id="CHEBI:29108"/>
        <label>1</label>
    </ligand>
</feature>
<feature type="binding site" evidence="5 9 20">
    <location>
        <position position="63"/>
    </location>
    <ligand>
        <name>Ca(2+)</name>
        <dbReference type="ChEBI" id="CHEBI:29108"/>
        <label>1</label>
    </ligand>
</feature>
<feature type="binding site" evidence="5 9 20">
    <location>
        <position position="91"/>
    </location>
    <ligand>
        <name>Ca(2+)</name>
        <dbReference type="ChEBI" id="CHEBI:29108"/>
        <label>2</label>
    </ligand>
</feature>
<feature type="binding site" evidence="5 9 20">
    <location>
        <position position="93"/>
    </location>
    <ligand>
        <name>Ca(2+)</name>
        <dbReference type="ChEBI" id="CHEBI:29108"/>
        <label>2</label>
    </ligand>
</feature>
<feature type="binding site" evidence="5 9 20">
    <location>
        <position position="95"/>
    </location>
    <ligand>
        <name>Ca(2+)</name>
        <dbReference type="ChEBI" id="CHEBI:29108"/>
        <label>2</label>
    </ligand>
</feature>
<feature type="binding site" evidence="5 9 20">
    <location>
        <position position="97"/>
    </location>
    <ligand>
        <name>Ca(2+)</name>
        <dbReference type="ChEBI" id="CHEBI:29108"/>
        <label>2</label>
    </ligand>
</feature>
<feature type="binding site" evidence="5 9 20">
    <location>
        <position position="102"/>
    </location>
    <ligand>
        <name>Ca(2+)</name>
        <dbReference type="ChEBI" id="CHEBI:29108"/>
        <label>2</label>
    </ligand>
</feature>
<feature type="modified residue" description="N-acetylalanine" evidence="1">
    <location>
        <position position="2"/>
    </location>
</feature>
<feature type="mutagenesis site" description="More than 50% reduction in IgE reactivity of 4 patients sera out of 11 patients sera tested." evidence="12">
    <original>S</original>
    <variation>A</variation>
    <location>
        <position position="24"/>
    </location>
</feature>
<feature type="mutagenesis site" description="More than 50% reduction in IgE reactivity of 7 patients sera out of 11 patients sera tested." evidence="12">
    <original>H</original>
    <variation>A</variation>
    <location>
        <position position="27"/>
    </location>
</feature>
<feature type="mutagenesis site" description="Complete loss and more than 50% reduction of IgE reactivity of 3 patients and 9 patients sera out of 11 patients sera tested, respectively." evidence="12">
    <original>K</original>
    <variation>A</variation>
    <location>
        <position position="28"/>
    </location>
</feature>
<feature type="mutagenesis site" description="Complete loss and more than 50% reduction of IgE reactivity of 5 patients and 10 patients sera out of 11 patients sera tested, respectively." evidence="12">
    <original>K</original>
    <variation>A</variation>
    <location>
        <position position="29"/>
    </location>
</feature>
<feature type="mutagenesis site" description="More than 50% reduction in IgE reactivity of 6 patients sera out of 11 patients sera tested." evidence="12">
    <original>K</original>
    <variation>A</variation>
    <location>
        <position position="32"/>
    </location>
</feature>
<feature type="mutagenesis site" description="Complete loss and more than 50% reduction of IgE reactivity of 7 patients and 9 patients sera out of 11 patients sera tested, respectively." evidence="12">
    <original>C</original>
    <variation>A</variation>
    <location>
        <position position="34"/>
    </location>
</feature>
<feature type="mutagenesis site" description="More than 50% reduction in IgE reactivity of 7 patients sera out of 11 patients sera tested." evidence="12">
    <original>L</original>
    <variation>A</variation>
    <location>
        <position position="36"/>
    </location>
</feature>
<feature type="mutagenesis site" description="Complete loss and more than 50% reduction of IgE reactivity of 5 patients and 10 patients sera out of 11 patients sera tested, respectively." evidence="12">
    <original>K</original>
    <variation>A</variation>
    <location>
        <position position="39"/>
    </location>
</feature>
<feature type="mutagenesis site" description="Loss or very weak IgE reactivity of 12 patients sera tested; when associated with A-91." evidence="11">
    <original>D</original>
    <variation>A</variation>
    <location>
        <position position="52"/>
    </location>
</feature>
<feature type="mutagenesis site" description="Loss or very weak IgE reactivity of 12 patients sera tested; when associated with A-52." evidence="11">
    <original>D</original>
    <variation>A</variation>
    <location>
        <position position="91"/>
    </location>
</feature>
<feature type="helix" evidence="21">
    <location>
        <begin position="3"/>
        <end position="6"/>
    </location>
</feature>
<feature type="helix" evidence="21">
    <location>
        <begin position="9"/>
        <end position="17"/>
    </location>
</feature>
<feature type="helix" evidence="21">
    <location>
        <begin position="27"/>
        <end position="34"/>
    </location>
</feature>
<feature type="turn" evidence="21">
    <location>
        <begin position="36"/>
        <end position="38"/>
    </location>
</feature>
<feature type="helix" evidence="21">
    <location>
        <begin position="41"/>
        <end position="51"/>
    </location>
</feature>
<feature type="strand" evidence="21">
    <location>
        <begin position="57"/>
        <end position="60"/>
    </location>
</feature>
<feature type="helix" evidence="21">
    <location>
        <begin position="61"/>
        <end position="64"/>
    </location>
</feature>
<feature type="turn" evidence="21">
    <location>
        <begin position="65"/>
        <end position="68"/>
    </location>
</feature>
<feature type="strand" evidence="21">
    <location>
        <begin position="69"/>
        <end position="71"/>
    </location>
</feature>
<feature type="helix" evidence="21">
    <location>
        <begin position="82"/>
        <end position="88"/>
    </location>
</feature>
<feature type="strand" evidence="21">
    <location>
        <begin position="95"/>
        <end position="98"/>
    </location>
</feature>
<feature type="helix" evidence="21">
    <location>
        <begin position="100"/>
        <end position="103"/>
    </location>
</feature>
<feature type="helix" evidence="21">
    <location>
        <begin position="105"/>
        <end position="108"/>
    </location>
</feature>
<reference key="1">
    <citation type="journal article" date="2003" name="Food Chem. Toxicol.">
        <title>Purification, reactivity with IgE and cDNA cloning of parvalbumin as the major allergen of mackerels.</title>
        <authorList>
            <person name="Hamada Y."/>
            <person name="Tanaka H."/>
            <person name="Ishizaki S."/>
            <person name="Ishida M."/>
            <person name="Nagashima Y."/>
            <person name="Shiomi K."/>
        </authorList>
    </citation>
    <scope>NUCLEOTIDE SEQUENCE [MRNA]</scope>
    <scope>PROTEIN SEQUENCE OF 47-72 AND 98-108</scope>
    <scope>PTM</scope>
    <scope>ALLERGEN</scope>
    <source>
        <tissue evidence="13">Skeletal muscle</tissue>
    </source>
</reference>
<reference evidence="19" key="2">
    <citation type="journal article" date="2006" name="Allergy">
        <title>Comparison of allergenicity and allergens between fish white and dark muscles.</title>
        <authorList>
            <person name="Kobayashi A."/>
            <person name="Tanaka H."/>
            <person name="Hamada Y."/>
            <person name="Ishizaki S."/>
            <person name="Nagashima Y."/>
            <person name="Shiomi K."/>
        </authorList>
    </citation>
    <scope>NUCLEOTIDE SEQUENCE [MRNA]</scope>
    <scope>TISSUE SPECIFICITY</scope>
    <scope>ALLERGEN</scope>
    <source>
        <tissue evidence="14">Muscle</tissue>
    </source>
</reference>
<reference evidence="18" key="3">
    <citation type="submission" date="2006-09" db="EMBL/GenBank/DDBJ databases">
        <title>Genomic DNA Sequence of Parvalbumin in Mackerel and Development of a PCR for Rapid Detection of Allergenic Mackerel Ingredients in Food.</title>
        <authorList>
            <person name="Hong K."/>
            <person name="Choi K."/>
        </authorList>
    </citation>
    <scope>NUCLEOTIDE SEQUENCE [GENOMIC DNA]</scope>
</reference>
<reference key="4">
    <citation type="journal article" date="2004" name="Allergol. Int.">
        <title>Expression and evaluation of IgE-binding capacity of recombinant Pacific mackerel parvalbumin.</title>
        <authorList>
            <person name="Hamada Y."/>
            <person name="Tanaka H."/>
            <person name="Sato A."/>
            <person name="Ishizaki S."/>
            <person name="Nagashima Y."/>
            <person name="Shiomi K."/>
        </authorList>
    </citation>
    <scope>ALLERGEN</scope>
</reference>
<reference key="5">
    <citation type="journal article" date="2008" name="Fish. Sci.">
        <title>Reduction in the IgE reactivity of Pacific mackerel parvalbumin by mutations at Ca2+-binding sites.</title>
        <authorList>
            <person name="Tomura S."/>
            <person name="Ishizaki S."/>
            <person name="Nagashima Y."/>
            <person name="Shiomi K."/>
        </authorList>
    </citation>
    <scope>ALLERGEN</scope>
    <scope>MUTAGENESIS OF ASP-52 AND ASP-91</scope>
</reference>
<reference key="6">
    <citation type="journal article" date="2008" name="Food Chem.">
        <title>Elucidation of a major IgE epitope of Pacific mackerel parvalbumin.</title>
        <authorList>
            <person name="Yoshida S."/>
            <person name="Ichimura A."/>
            <person name="Shiomi K."/>
        </authorList>
    </citation>
    <scope>ALLERGEN</scope>
    <scope>REGION</scope>
    <scope>MUTAGENESIS OF SER-24; HIS-27; LYS-28; LYS-29; LYS-32; CYS-34; LEU-36 AND LYS-39</scope>
</reference>
<reference key="7">
    <citation type="journal article" date="2016" name="Food Chem.">
        <title>Reduction in IgE reactivity of Pacific mackerel parvalbumin by heat treatment.</title>
        <authorList>
            <person name="Kubota H."/>
            <person name="Kobayashi A."/>
            <person name="Kobayashi Y."/>
            <person name="Shiomi K."/>
            <person name="Hamada-Sato N."/>
        </authorList>
    </citation>
    <scope>BIOPHYSICOCHEMICAL PROPERTIES</scope>
    <scope>ALLERGEN</scope>
</reference>
<reference key="8">
    <citation type="journal article" date="2017" name="Sci. Rep.">
        <title>Solution structure of the major fish allergen parvalbumin Sco j 1 derived from the Pacific mackerel.</title>
        <authorList>
            <person name="Kumeta H."/>
            <person name="Nakayama H."/>
            <person name="Ogura K."/>
        </authorList>
    </citation>
    <scope>STRUCTURE BY NMR IN COMPLEX WITH CALCIUM</scope>
</reference>
<organism>
    <name type="scientific">Scomber japonicus</name>
    <name type="common">Chub mackerel</name>
    <dbReference type="NCBI Taxonomy" id="13676"/>
    <lineage>
        <taxon>Eukaryota</taxon>
        <taxon>Metazoa</taxon>
        <taxon>Chordata</taxon>
        <taxon>Craniata</taxon>
        <taxon>Vertebrata</taxon>
        <taxon>Euteleostomi</taxon>
        <taxon>Actinopterygii</taxon>
        <taxon>Neopterygii</taxon>
        <taxon>Teleostei</taxon>
        <taxon>Neoteleostei</taxon>
        <taxon>Acanthomorphata</taxon>
        <taxon>Pelagiaria</taxon>
        <taxon>Scombriformes</taxon>
        <taxon>Scombridae</taxon>
        <taxon>Scomber</taxon>
    </lineage>
</organism>
<keyword id="KW-0002">3D-structure</keyword>
<keyword id="KW-0007">Acetylation</keyword>
<keyword id="KW-0020">Allergen</keyword>
<keyword id="KW-0106">Calcium</keyword>
<keyword id="KW-0903">Direct protein sequencing</keyword>
<keyword id="KW-0479">Metal-binding</keyword>
<keyword id="KW-0514">Muscle protein</keyword>
<keyword id="KW-0677">Repeat</keyword>
<dbReference type="EMBL" id="AB091470">
    <property type="protein sequence ID" value="BAC66618.1"/>
    <property type="molecule type" value="mRNA"/>
</dbReference>
<dbReference type="EMBL" id="AB211366">
    <property type="protein sequence ID" value="BAE46764.1"/>
    <property type="molecule type" value="mRNA"/>
</dbReference>
<dbReference type="EMBL" id="EF016113">
    <property type="protein sequence ID" value="ABJ98932.1"/>
    <property type="molecule type" value="Genomic_DNA"/>
</dbReference>
<dbReference type="RefSeq" id="XP_053193721.1">
    <property type="nucleotide sequence ID" value="XM_053337746.1"/>
</dbReference>
<dbReference type="PDB" id="5XND">
    <property type="method" value="NMR"/>
    <property type="chains" value="A=1-109"/>
</dbReference>
<dbReference type="PDBsum" id="5XND"/>
<dbReference type="SMR" id="P59747"/>
<dbReference type="Allergome" id="1097">
    <property type="allergen name" value="Sco j 1"/>
</dbReference>
<dbReference type="GeneID" id="128378285"/>
<dbReference type="OrthoDB" id="26525at2759"/>
<dbReference type="GO" id="GO:0005737">
    <property type="term" value="C:cytoplasm"/>
    <property type="evidence" value="ECO:0007669"/>
    <property type="project" value="TreeGrafter"/>
</dbReference>
<dbReference type="GO" id="GO:0005509">
    <property type="term" value="F:calcium ion binding"/>
    <property type="evidence" value="ECO:0000314"/>
    <property type="project" value="UniProtKB"/>
</dbReference>
<dbReference type="CDD" id="cd16255">
    <property type="entry name" value="EFh_parvalbumin_beta"/>
    <property type="match status" value="1"/>
</dbReference>
<dbReference type="FunFam" id="1.10.238.10:FF:000060">
    <property type="entry name" value="Parvalbumin, thymic"/>
    <property type="match status" value="1"/>
</dbReference>
<dbReference type="Gene3D" id="1.10.238.10">
    <property type="entry name" value="EF-hand"/>
    <property type="match status" value="1"/>
</dbReference>
<dbReference type="InterPro" id="IPR011992">
    <property type="entry name" value="EF-hand-dom_pair"/>
</dbReference>
<dbReference type="InterPro" id="IPR018247">
    <property type="entry name" value="EF_Hand_1_Ca_BS"/>
</dbReference>
<dbReference type="InterPro" id="IPR002048">
    <property type="entry name" value="EF_hand_dom"/>
</dbReference>
<dbReference type="InterPro" id="IPR008080">
    <property type="entry name" value="Parvalbumin"/>
</dbReference>
<dbReference type="PANTHER" id="PTHR11653:SF12">
    <property type="entry name" value="PARVALBUMIN"/>
    <property type="match status" value="1"/>
</dbReference>
<dbReference type="PANTHER" id="PTHR11653">
    <property type="entry name" value="PARVALBUMIN ALPHA"/>
    <property type="match status" value="1"/>
</dbReference>
<dbReference type="Pfam" id="PF13499">
    <property type="entry name" value="EF-hand_7"/>
    <property type="match status" value="1"/>
</dbReference>
<dbReference type="PRINTS" id="PR01697">
    <property type="entry name" value="PARVALBUMIN"/>
</dbReference>
<dbReference type="SMART" id="SM00054">
    <property type="entry name" value="EFh"/>
    <property type="match status" value="2"/>
</dbReference>
<dbReference type="SUPFAM" id="SSF47473">
    <property type="entry name" value="EF-hand"/>
    <property type="match status" value="1"/>
</dbReference>
<dbReference type="PROSITE" id="PS00018">
    <property type="entry name" value="EF_HAND_1"/>
    <property type="match status" value="2"/>
</dbReference>
<dbReference type="PROSITE" id="PS50222">
    <property type="entry name" value="EF_HAND_2"/>
    <property type="match status" value="2"/>
</dbReference>
<proteinExistence type="evidence at protein level"/>
<sequence>MAFASVLKDAEVTAALDGCKAAGSFDHKKFFKACGLSGKSTDEVKKAFAIIDQDKSGFIEEEELKLFLQNFKAGARALSDAETKAFLKAGDSDGDGKIGIDEFAAMIKG</sequence>
<protein>
    <recommendedName>
        <fullName evidence="17">Parvalbumin beta</fullName>
    </recommendedName>
    <alternativeName>
        <fullName evidence="14 19">Dark muscle parvalbumin</fullName>
        <shortName evidence="19">saba-DPA</shortName>
    </alternativeName>
    <alternativeName>
        <fullName evidence="14">White muscle parvalbumin</fullName>
    </alternativeName>
    <allergenName evidence="15 16">Sco j 1</allergenName>
</protein>
<name>PRVB_SCOJP</name>
<comment type="function">
    <text evidence="3 9">In muscle, parvalbumin is thought to be involved in relaxation after contraction (By similarity). It binds two calcium ions (PubMed:29215073).</text>
</comment>
<comment type="biophysicochemical properties">
    <temperatureDependence>
        <text evidence="8">Highly thermostable. Not degraded by heating at 140 degrees Celsius for 20 minutes.</text>
    </temperatureDependence>
</comment>
<comment type="tissue specificity">
    <text evidence="7">Expressed in both white and dark muscles (at protein level). About eight and a half times lower expression in the dark muscle than in the white muscle (at protein level).</text>
</comment>
<comment type="PTM">
    <text evidence="6">The N-terminus is blocked.</text>
</comment>
<comment type="allergen">
    <text evidence="6 7 8 10 11 12">Causes an allergic reaction in human (PubMed:12842183, PubMed:16436146, PubMed:27041301, Ref.4, Ref.5, Ref.6). Binds to IgE in patients allergic to fish parvalbumin (PubMed:16436146, PubMed:27041301, Ref.4, Ref.6). Binds to IgE in 80% of 5 fish-allergic patients tested (PubMed:12842183). IgE reactivity linearly decreases with the increase in heating temperature (from 40 to 140 degrees Celsius). More than 50% reduction of allergenicity by heating at 80 degrees Celsius and almost complete loss of allergenicity by heating at 140 degrees Celsius (PubMed:27041301). IgE reactivity of 12 fish-allergic patients tested is significantly reduced (60-100% reduction) in the presence of EGTA as a result of Ca(2+) depletion (Ref.5).</text>
</comment>
<comment type="similarity">
    <text evidence="17">Belongs to the parvalbumin family.</text>
</comment>
<evidence type="ECO:0000250" key="1">
    <source>
        <dbReference type="UniProtKB" id="P02621"/>
    </source>
</evidence>
<evidence type="ECO:0000250" key="2">
    <source>
        <dbReference type="UniProtKB" id="P09227"/>
    </source>
</evidence>
<evidence type="ECO:0000250" key="3">
    <source>
        <dbReference type="UniProtKB" id="P86432"/>
    </source>
</evidence>
<evidence type="ECO:0000250" key="4">
    <source>
        <dbReference type="UniProtKB" id="Q90YK9"/>
    </source>
</evidence>
<evidence type="ECO:0000255" key="5">
    <source>
        <dbReference type="PROSITE-ProRule" id="PRU00448"/>
    </source>
</evidence>
<evidence type="ECO:0000269" key="6">
    <source>
    </source>
</evidence>
<evidence type="ECO:0000269" key="7">
    <source>
    </source>
</evidence>
<evidence type="ECO:0000269" key="8">
    <source>
    </source>
</evidence>
<evidence type="ECO:0000269" key="9">
    <source>
    </source>
</evidence>
<evidence type="ECO:0000269" key="10">
    <source ref="4"/>
</evidence>
<evidence type="ECO:0000269" key="11">
    <source ref="5"/>
</evidence>
<evidence type="ECO:0000269" key="12">
    <source ref="6"/>
</evidence>
<evidence type="ECO:0000303" key="13">
    <source>
    </source>
</evidence>
<evidence type="ECO:0000303" key="14">
    <source>
    </source>
</evidence>
<evidence type="ECO:0000303" key="15">
    <source>
    </source>
</evidence>
<evidence type="ECO:0000303" key="16">
    <source ref="6"/>
</evidence>
<evidence type="ECO:0000305" key="17"/>
<evidence type="ECO:0000312" key="18">
    <source>
        <dbReference type="EMBL" id="ABJ98932.1"/>
    </source>
</evidence>
<evidence type="ECO:0000312" key="19">
    <source>
        <dbReference type="EMBL" id="BAE46764.1"/>
    </source>
</evidence>
<evidence type="ECO:0007744" key="20">
    <source>
        <dbReference type="PDB" id="5XND"/>
    </source>
</evidence>
<evidence type="ECO:0007829" key="21">
    <source>
        <dbReference type="PDB" id="5XND"/>
    </source>
</evidence>
<accession>P59747</accession>
<accession>Q3C2C3</accession>
<accession>Q7ZW61</accession>